<reference key="1">
    <citation type="journal article" date="2003" name="J. Vet. Intern. Med.">
        <title>Congenital hypothyroidism with goiter in toy fox terriers.</title>
        <authorList>
            <person name="Fyfe J.C."/>
            <person name="Kampschmidt K."/>
            <person name="Dang V."/>
            <person name="Poteet B.A."/>
            <person name="He Q."/>
            <person name="Lowrie C."/>
            <person name="Graham P.A."/>
            <person name="Fetro V.M."/>
        </authorList>
    </citation>
    <scope>NUCLEOTIDE SEQUENCE [MRNA]</scope>
    <source>
        <tissue>Thyroid</tissue>
    </source>
</reference>
<reference key="2">
    <citation type="journal article" date="2005" name="Nature">
        <title>Genome sequence, comparative analysis and haplotype structure of the domestic dog.</title>
        <authorList>
            <person name="Lindblad-Toh K."/>
            <person name="Wade C.M."/>
            <person name="Mikkelsen T.S."/>
            <person name="Karlsson E.K."/>
            <person name="Jaffe D.B."/>
            <person name="Kamal M."/>
            <person name="Clamp M."/>
            <person name="Chang J.L."/>
            <person name="Kulbokas E.J. III"/>
            <person name="Zody M.C."/>
            <person name="Mauceli E."/>
            <person name="Xie X."/>
            <person name="Breen M."/>
            <person name="Wayne R.K."/>
            <person name="Ostrander E.A."/>
            <person name="Ponting C.P."/>
            <person name="Galibert F."/>
            <person name="Smith D.R."/>
            <person name="deJong P.J."/>
            <person name="Kirkness E.F."/>
            <person name="Alvarez P."/>
            <person name="Biagi T."/>
            <person name="Brockman W."/>
            <person name="Butler J."/>
            <person name="Chin C.-W."/>
            <person name="Cook A."/>
            <person name="Cuff J."/>
            <person name="Daly M.J."/>
            <person name="DeCaprio D."/>
            <person name="Gnerre S."/>
            <person name="Grabherr M."/>
            <person name="Kellis M."/>
            <person name="Kleber M."/>
            <person name="Bardeleben C."/>
            <person name="Goodstadt L."/>
            <person name="Heger A."/>
            <person name="Hitte C."/>
            <person name="Kim L."/>
            <person name="Koepfli K.-P."/>
            <person name="Parker H.G."/>
            <person name="Pollinger J.P."/>
            <person name="Searle S.M.J."/>
            <person name="Sutter N.B."/>
            <person name="Thomas R."/>
            <person name="Webber C."/>
            <person name="Baldwin J."/>
            <person name="Abebe A."/>
            <person name="Abouelleil A."/>
            <person name="Aftuck L."/>
            <person name="Ait-Zahra M."/>
            <person name="Aldredge T."/>
            <person name="Allen N."/>
            <person name="An P."/>
            <person name="Anderson S."/>
            <person name="Antoine C."/>
            <person name="Arachchi H."/>
            <person name="Aslam A."/>
            <person name="Ayotte L."/>
            <person name="Bachantsang P."/>
            <person name="Barry A."/>
            <person name="Bayul T."/>
            <person name="Benamara M."/>
            <person name="Berlin A."/>
            <person name="Bessette D."/>
            <person name="Blitshteyn B."/>
            <person name="Bloom T."/>
            <person name="Blye J."/>
            <person name="Boguslavskiy L."/>
            <person name="Bonnet C."/>
            <person name="Boukhgalter B."/>
            <person name="Brown A."/>
            <person name="Cahill P."/>
            <person name="Calixte N."/>
            <person name="Camarata J."/>
            <person name="Cheshatsang Y."/>
            <person name="Chu J."/>
            <person name="Citroen M."/>
            <person name="Collymore A."/>
            <person name="Cooke P."/>
            <person name="Dawoe T."/>
            <person name="Daza R."/>
            <person name="Decktor K."/>
            <person name="DeGray S."/>
            <person name="Dhargay N."/>
            <person name="Dooley K."/>
            <person name="Dooley K."/>
            <person name="Dorje P."/>
            <person name="Dorjee K."/>
            <person name="Dorris L."/>
            <person name="Duffey N."/>
            <person name="Dupes A."/>
            <person name="Egbiremolen O."/>
            <person name="Elong R."/>
            <person name="Falk J."/>
            <person name="Farina A."/>
            <person name="Faro S."/>
            <person name="Ferguson D."/>
            <person name="Ferreira P."/>
            <person name="Fisher S."/>
            <person name="FitzGerald M."/>
            <person name="Foley K."/>
            <person name="Foley C."/>
            <person name="Franke A."/>
            <person name="Friedrich D."/>
            <person name="Gage D."/>
            <person name="Garber M."/>
            <person name="Gearin G."/>
            <person name="Giannoukos G."/>
            <person name="Goode T."/>
            <person name="Goyette A."/>
            <person name="Graham J."/>
            <person name="Grandbois E."/>
            <person name="Gyaltsen K."/>
            <person name="Hafez N."/>
            <person name="Hagopian D."/>
            <person name="Hagos B."/>
            <person name="Hall J."/>
            <person name="Healy C."/>
            <person name="Hegarty R."/>
            <person name="Honan T."/>
            <person name="Horn A."/>
            <person name="Houde N."/>
            <person name="Hughes L."/>
            <person name="Hunnicutt L."/>
            <person name="Husby M."/>
            <person name="Jester B."/>
            <person name="Jones C."/>
            <person name="Kamat A."/>
            <person name="Kanga B."/>
            <person name="Kells C."/>
            <person name="Khazanovich D."/>
            <person name="Kieu A.C."/>
            <person name="Kisner P."/>
            <person name="Kumar M."/>
            <person name="Lance K."/>
            <person name="Landers T."/>
            <person name="Lara M."/>
            <person name="Lee W."/>
            <person name="Leger J.-P."/>
            <person name="Lennon N."/>
            <person name="Leuper L."/>
            <person name="LeVine S."/>
            <person name="Liu J."/>
            <person name="Liu X."/>
            <person name="Lokyitsang Y."/>
            <person name="Lokyitsang T."/>
            <person name="Lui A."/>
            <person name="Macdonald J."/>
            <person name="Major J."/>
            <person name="Marabella R."/>
            <person name="Maru K."/>
            <person name="Matthews C."/>
            <person name="McDonough S."/>
            <person name="Mehta T."/>
            <person name="Meldrim J."/>
            <person name="Melnikov A."/>
            <person name="Meneus L."/>
            <person name="Mihalev A."/>
            <person name="Mihova T."/>
            <person name="Miller K."/>
            <person name="Mittelman R."/>
            <person name="Mlenga V."/>
            <person name="Mulrain L."/>
            <person name="Munson G."/>
            <person name="Navidi A."/>
            <person name="Naylor J."/>
            <person name="Nguyen T."/>
            <person name="Nguyen N."/>
            <person name="Nguyen C."/>
            <person name="Nguyen T."/>
            <person name="Nicol R."/>
            <person name="Norbu N."/>
            <person name="Norbu C."/>
            <person name="Novod N."/>
            <person name="Nyima T."/>
            <person name="Olandt P."/>
            <person name="O'Neill B."/>
            <person name="O'Neill K."/>
            <person name="Osman S."/>
            <person name="Oyono L."/>
            <person name="Patti C."/>
            <person name="Perrin D."/>
            <person name="Phunkhang P."/>
            <person name="Pierre F."/>
            <person name="Priest M."/>
            <person name="Rachupka A."/>
            <person name="Raghuraman S."/>
            <person name="Rameau R."/>
            <person name="Ray V."/>
            <person name="Raymond C."/>
            <person name="Rege F."/>
            <person name="Rise C."/>
            <person name="Rogers J."/>
            <person name="Rogov P."/>
            <person name="Sahalie J."/>
            <person name="Settipalli S."/>
            <person name="Sharpe T."/>
            <person name="Shea T."/>
            <person name="Sheehan M."/>
            <person name="Sherpa N."/>
            <person name="Shi J."/>
            <person name="Shih D."/>
            <person name="Sloan J."/>
            <person name="Smith C."/>
            <person name="Sparrow T."/>
            <person name="Stalker J."/>
            <person name="Stange-Thomann N."/>
            <person name="Stavropoulos S."/>
            <person name="Stone C."/>
            <person name="Stone S."/>
            <person name="Sykes S."/>
            <person name="Tchuinga P."/>
            <person name="Tenzing P."/>
            <person name="Tesfaye S."/>
            <person name="Thoulutsang D."/>
            <person name="Thoulutsang Y."/>
            <person name="Topham K."/>
            <person name="Topping I."/>
            <person name="Tsamla T."/>
            <person name="Vassiliev H."/>
            <person name="Venkataraman V."/>
            <person name="Vo A."/>
            <person name="Wangchuk T."/>
            <person name="Wangdi T."/>
            <person name="Weiand M."/>
            <person name="Wilkinson J."/>
            <person name="Wilson A."/>
            <person name="Yadav S."/>
            <person name="Yang S."/>
            <person name="Yang X."/>
            <person name="Young G."/>
            <person name="Yu Q."/>
            <person name="Zainoun J."/>
            <person name="Zembek L."/>
            <person name="Zimmer A."/>
            <person name="Lander E.S."/>
        </authorList>
    </citation>
    <scope>NUCLEOTIDE SEQUENCE [LARGE SCALE GENOMIC DNA]</scope>
    <source>
        <strain>Boxer</strain>
    </source>
</reference>
<reference key="3">
    <citation type="submission" date="2011-10" db="EMBL/GenBank/DDBJ databases">
        <authorList>
            <person name="Dodgson S.E."/>
            <person name="Day R."/>
            <person name="Fyfe J.C."/>
        </authorList>
    </citation>
    <scope>SEQUENCE REVISION TO N-TERMINUS</scope>
</reference>
<sequence>MVGLVPAGSAWGGRALAVLGVTLLVALARGLLPFFLGGRDLLWGQSGEASVLGVVEESRRVVDGAIQHTVRRDLSKRGLPSPSQLLSFSKLPEPTSRAVSRAAEIMEASVQAVRTRVYGKLGRSWPLTDTLPEAVLDTIANASGCRPHMLPPRCPDTCLARKYRLITGACNNRDHPRWGASNTALARWLPPAYEDGISEPRGWNPHVLYSGFPLPPVREVTRQVIRVPNEAVTEDDQYSDLLTVWGQYIDHDVAFTPQSASGAAFGAGADCQLTCENRSPCFPIQLPPDASGPACLPFSRSSAACGTGIQGAFFGNLSSANPRQQMNGLTSFLDASTVYGSSPALEKQLRNWTSAEGLLRVNTRHWDAGRAHLPFMRPPAPLACVPEPGTRGTAGAPCFLAGDSRASEVPTLAALHTLWLREHNRLASALKALNAHWSADTAYQEARKVVGALHQIITLRDYVPKVLGPEAFQQHVGPYEGYDPTMDPTVSNVFSTAAFRLGHATVHPLVRRLDARFQEHPGLPPLGLQDAFFPWRLLKEGGLDPLLRGLLASPAKLPVQEQLMNEELTERLFVLGSSGSLDLASINLQRGRDHGLPGYNAWREFCGLGRLHTRAELRSAVANATLAGRIMDLYGHPDNIDVWLGGLAEPLLPRARTGPLFACLIGRQMKALRDGDRFWWESSGVFTDEQRRELARHSLSRVICDNTGLPSVPADAFQVSRFPQDFEPCENIPGLNLDVWREALPQGDACGLPDSLDNGDVVLCGEAGRRVLVFSCRHGFKLQGPEQVACSPRGGAVRAPVCRDINECEDASHPPCHGSARCRNTKGGFRCECTDPAVLGEDGTTCVDSGRLPKASLVSIALGIVLVVGLAGLTWTLVCRWAHAGRKASLSIAELGGRGAPPPGRGAGQDGASGSLVPPLGPQGRTRAVDPTSSRSHVAQGSPA</sequence>
<name>PERT_CANLF</name>
<comment type="function">
    <text evidence="2">Iodination and coupling of the hormonogenic tyrosines in thyroglobulin to yield the thyroid hormones T(3) and T(4).</text>
</comment>
<comment type="catalytic activity">
    <reaction evidence="2">
        <text>2 iodide + H2O2 + 2 H(+) = diiodine + 2 H2O</text>
        <dbReference type="Rhea" id="RHEA:23336"/>
        <dbReference type="ChEBI" id="CHEBI:15377"/>
        <dbReference type="ChEBI" id="CHEBI:15378"/>
        <dbReference type="ChEBI" id="CHEBI:16240"/>
        <dbReference type="ChEBI" id="CHEBI:16382"/>
        <dbReference type="ChEBI" id="CHEBI:17606"/>
        <dbReference type="EC" id="1.11.1.8"/>
    </reaction>
</comment>
<comment type="catalytic activity">
    <reaction evidence="2">
        <text>[thyroglobulin]-L-tyrosine + iodide + H2O2 + H(+) = [thyroglobulin]-3-iodo-L-tyrosine + 2 H2O</text>
        <dbReference type="Rhea" id="RHEA:48956"/>
        <dbReference type="Rhea" id="RHEA-COMP:12274"/>
        <dbReference type="Rhea" id="RHEA-COMP:12275"/>
        <dbReference type="ChEBI" id="CHEBI:15377"/>
        <dbReference type="ChEBI" id="CHEBI:15378"/>
        <dbReference type="ChEBI" id="CHEBI:16240"/>
        <dbReference type="ChEBI" id="CHEBI:16382"/>
        <dbReference type="ChEBI" id="CHEBI:46858"/>
        <dbReference type="ChEBI" id="CHEBI:90870"/>
        <dbReference type="EC" id="1.11.1.8"/>
    </reaction>
</comment>
<comment type="catalytic activity">
    <reaction evidence="2">
        <text>[thyroglobulin]-3-iodo-L-tyrosine + iodide + H2O2 + H(+) = [thyroglobulin]-3,5-diiodo-L-tyrosine + 2 H2O</text>
        <dbReference type="Rhea" id="RHEA:48960"/>
        <dbReference type="Rhea" id="RHEA-COMP:12275"/>
        <dbReference type="Rhea" id="RHEA-COMP:12276"/>
        <dbReference type="ChEBI" id="CHEBI:15377"/>
        <dbReference type="ChEBI" id="CHEBI:15378"/>
        <dbReference type="ChEBI" id="CHEBI:16240"/>
        <dbReference type="ChEBI" id="CHEBI:16382"/>
        <dbReference type="ChEBI" id="CHEBI:90870"/>
        <dbReference type="ChEBI" id="CHEBI:90871"/>
        <dbReference type="EC" id="1.11.1.8"/>
    </reaction>
</comment>
<comment type="catalytic activity">
    <reaction evidence="2">
        <text>2 [thyroglobulin]-3,5-diiodo-L-tyrosine + H2O2 = [thyroglobulin]-L-thyroxine + [thyroglobulin]-dehydroalanine + 2 H2O</text>
        <dbReference type="Rhea" id="RHEA:48964"/>
        <dbReference type="Rhea" id="RHEA-COMP:12276"/>
        <dbReference type="Rhea" id="RHEA-COMP:12277"/>
        <dbReference type="Rhea" id="RHEA-COMP:12278"/>
        <dbReference type="ChEBI" id="CHEBI:15377"/>
        <dbReference type="ChEBI" id="CHEBI:16240"/>
        <dbReference type="ChEBI" id="CHEBI:90871"/>
        <dbReference type="ChEBI" id="CHEBI:90872"/>
        <dbReference type="ChEBI" id="CHEBI:90873"/>
        <dbReference type="EC" id="1.11.1.8"/>
    </reaction>
</comment>
<comment type="catalytic activity">
    <reaction evidence="2">
        <text>[thyroglobulin]-3-iodo-L-tyrosine + [thyroglobulin]-3,5-diiodo-L-tyrosine + H2O2 = [thyroglobulin]-3,3',5-triiodo-L-thyronine + [thyroglobulin]-dehydroalanine + 2 H2O</text>
        <dbReference type="Rhea" id="RHEA:48968"/>
        <dbReference type="Rhea" id="RHEA-COMP:12275"/>
        <dbReference type="Rhea" id="RHEA-COMP:12276"/>
        <dbReference type="Rhea" id="RHEA-COMP:12278"/>
        <dbReference type="Rhea" id="RHEA-COMP:12279"/>
        <dbReference type="ChEBI" id="CHEBI:15377"/>
        <dbReference type="ChEBI" id="CHEBI:16240"/>
        <dbReference type="ChEBI" id="CHEBI:90870"/>
        <dbReference type="ChEBI" id="CHEBI:90871"/>
        <dbReference type="ChEBI" id="CHEBI:90873"/>
        <dbReference type="ChEBI" id="CHEBI:90874"/>
        <dbReference type="EC" id="1.11.1.8"/>
    </reaction>
</comment>
<comment type="cofactor">
    <cofactor evidence="5">
        <name>Ca(2+)</name>
        <dbReference type="ChEBI" id="CHEBI:29108"/>
    </cofactor>
    <text evidence="5">Binds 1 Ca(2+) ion per heterodimer.</text>
</comment>
<comment type="cofactor">
    <cofactor evidence="5">
        <name>heme b</name>
        <dbReference type="ChEBI" id="CHEBI:60344"/>
    </cofactor>
    <text evidence="5">Binds 1 heme b (iron(II)-protoporphyrin IX) group covalently per heterodimer.</text>
</comment>
<comment type="pathway">
    <text>Hormone biosynthesis; thyroid hormone biosynthesis.</text>
</comment>
<comment type="subunit">
    <text evidence="1">Interacts with DUOX1, DUOX2 and CYBA.</text>
</comment>
<comment type="subcellular location">
    <subcellularLocation>
        <location evidence="1">Membrane</location>
        <topology evidence="1">Single-pass type I membrane protein</topology>
    </subcellularLocation>
</comment>
<comment type="PTM">
    <text evidence="1">Heme is covalently bound through a H(2)O(2)-dependent autocatalytic process. Heme insertion is important for the delivery of protein at the cell surface (By similarity).</text>
</comment>
<comment type="PTM">
    <text evidence="1">Cleaved in its N-terminal part.</text>
</comment>
<comment type="disease">
    <text>Defects in TPO are the cause of congenital hypothyroidism with goiter, a simple autosomal recessive trait observed in Toy Fox Terriers (TFTs). Neonatal affected pups exhibited inactivity, abnormal hair coat, stenotic ear canals, and delayed eye opening. Palpable ventrolateral cervical swellings were evident by 1 week of age. Serum thyroid hormone and thyroid-stimulating hormone concentrations were low and high, respectively. Histologic examination of the cervical masses disclosed cuboidal to columnar follicular epithelial cell hyperplasia with widely varying follicular size, shape, and amount of colloid. Oral thyroid hormone replacement therapy restored near-normal growth and development. At 8 weeks of age, radioiodine uptake and perchlorate discharge testing indicated an iodine organification defect. Biochemical analysis of thyroid tissue from affected dogs demonstrated enzymatic iodine oxidation deficiency and lack of sodium dodecyl sulfate-resistant thyroglobulin dimers, suggesting thyroid peroxidase deficiency.</text>
</comment>
<comment type="similarity">
    <text evidence="5">Belongs to the peroxidase family. XPO subfamily.</text>
</comment>
<proteinExistence type="evidence at transcript level"/>
<organism>
    <name type="scientific">Canis lupus familiaris</name>
    <name type="common">Dog</name>
    <name type="synonym">Canis familiaris</name>
    <dbReference type="NCBI Taxonomy" id="9615"/>
    <lineage>
        <taxon>Eukaryota</taxon>
        <taxon>Metazoa</taxon>
        <taxon>Chordata</taxon>
        <taxon>Craniata</taxon>
        <taxon>Vertebrata</taxon>
        <taxon>Euteleostomi</taxon>
        <taxon>Mammalia</taxon>
        <taxon>Eutheria</taxon>
        <taxon>Laurasiatheria</taxon>
        <taxon>Carnivora</taxon>
        <taxon>Caniformia</taxon>
        <taxon>Canidae</taxon>
        <taxon>Canis</taxon>
    </lineage>
</organism>
<protein>
    <recommendedName>
        <fullName>Thyroid peroxidase</fullName>
        <shortName>TPO</shortName>
        <ecNumber evidence="2">1.11.1.8</ecNumber>
    </recommendedName>
</protein>
<evidence type="ECO:0000250" key="1"/>
<evidence type="ECO:0000250" key="2">
    <source>
        <dbReference type="UniProtKB" id="P09933"/>
    </source>
</evidence>
<evidence type="ECO:0000255" key="3"/>
<evidence type="ECO:0000255" key="4">
    <source>
        <dbReference type="PROSITE-ProRule" id="PRU00076"/>
    </source>
</evidence>
<evidence type="ECO:0000255" key="5">
    <source>
        <dbReference type="PROSITE-ProRule" id="PRU00298"/>
    </source>
</evidence>
<evidence type="ECO:0000255" key="6">
    <source>
        <dbReference type="PROSITE-ProRule" id="PRU00302"/>
    </source>
</evidence>
<evidence type="ECO:0000256" key="7">
    <source>
        <dbReference type="SAM" id="MobiDB-lite"/>
    </source>
</evidence>
<evidence type="ECO:0000305" key="8"/>
<dbReference type="EC" id="1.11.1.8" evidence="2"/>
<dbReference type="EMBL" id="AY094504">
    <property type="protein sequence ID" value="AAM26737.2"/>
    <property type="molecule type" value="mRNA"/>
</dbReference>
<dbReference type="EMBL" id="JH373195">
    <property type="status" value="NOT_ANNOTATED_CDS"/>
    <property type="molecule type" value="Genomic_DNA"/>
</dbReference>
<dbReference type="RefSeq" id="NP_001003009.2">
    <property type="nucleotide sequence ID" value="NM_001003009.2"/>
</dbReference>
<dbReference type="SMR" id="Q8HYB7"/>
<dbReference type="STRING" id="9615.ENSCAFP00000004788"/>
<dbReference type="PeroxiBase" id="3334">
    <property type="entry name" value="CfaTPO"/>
</dbReference>
<dbReference type="GlyCosmos" id="Q8HYB7">
    <property type="glycosylation" value="4 sites, No reported glycans"/>
</dbReference>
<dbReference type="PaxDb" id="9612-ENSCAFP00000004788"/>
<dbReference type="GeneID" id="403521"/>
<dbReference type="KEGG" id="cfa:403521"/>
<dbReference type="CTD" id="7173"/>
<dbReference type="eggNOG" id="KOG2408">
    <property type="taxonomic scope" value="Eukaryota"/>
</dbReference>
<dbReference type="HOGENOM" id="CLU_006087_1_0_1"/>
<dbReference type="InParanoid" id="Q8HYB7"/>
<dbReference type="OMA" id="FMAGDTR"/>
<dbReference type="OrthoDB" id="823504at2759"/>
<dbReference type="TreeFam" id="TF314316"/>
<dbReference type="UniPathway" id="UPA00194"/>
<dbReference type="Proteomes" id="UP000002254">
    <property type="component" value="Chromosome 17"/>
</dbReference>
<dbReference type="Proteomes" id="UP000694429">
    <property type="component" value="Unplaced"/>
</dbReference>
<dbReference type="Proteomes" id="UP000694542">
    <property type="component" value="Unplaced"/>
</dbReference>
<dbReference type="Proteomes" id="UP000805418">
    <property type="component" value="Unplaced"/>
</dbReference>
<dbReference type="GO" id="GO:0005615">
    <property type="term" value="C:extracellular space"/>
    <property type="evidence" value="ECO:0000318"/>
    <property type="project" value="GO_Central"/>
</dbReference>
<dbReference type="GO" id="GO:0016020">
    <property type="term" value="C:membrane"/>
    <property type="evidence" value="ECO:0007669"/>
    <property type="project" value="UniProtKB-SubCell"/>
</dbReference>
<dbReference type="GO" id="GO:0005509">
    <property type="term" value="F:calcium ion binding"/>
    <property type="evidence" value="ECO:0007669"/>
    <property type="project" value="InterPro"/>
</dbReference>
<dbReference type="GO" id="GO:0020037">
    <property type="term" value="F:heme binding"/>
    <property type="evidence" value="ECO:0007669"/>
    <property type="project" value="InterPro"/>
</dbReference>
<dbReference type="GO" id="GO:0004447">
    <property type="term" value="F:iodide peroxidase activity"/>
    <property type="evidence" value="ECO:0007669"/>
    <property type="project" value="UniProtKB-EC"/>
</dbReference>
<dbReference type="GO" id="GO:0004601">
    <property type="term" value="F:peroxidase activity"/>
    <property type="evidence" value="ECO:0000318"/>
    <property type="project" value="GO_Central"/>
</dbReference>
<dbReference type="GO" id="GO:0042446">
    <property type="term" value="P:hormone biosynthetic process"/>
    <property type="evidence" value="ECO:0007669"/>
    <property type="project" value="UniProtKB-KW"/>
</dbReference>
<dbReference type="GO" id="GO:0042744">
    <property type="term" value="P:hydrogen peroxide catabolic process"/>
    <property type="evidence" value="ECO:0007669"/>
    <property type="project" value="UniProtKB-KW"/>
</dbReference>
<dbReference type="GO" id="GO:0006979">
    <property type="term" value="P:response to oxidative stress"/>
    <property type="evidence" value="ECO:0007669"/>
    <property type="project" value="InterPro"/>
</dbReference>
<dbReference type="GO" id="GO:0006590">
    <property type="term" value="P:thyroid hormone generation"/>
    <property type="evidence" value="ECO:0007669"/>
    <property type="project" value="UniProtKB-UniPathway"/>
</dbReference>
<dbReference type="CDD" id="cd00033">
    <property type="entry name" value="CCP"/>
    <property type="match status" value="1"/>
</dbReference>
<dbReference type="CDD" id="cd00054">
    <property type="entry name" value="EGF_CA"/>
    <property type="match status" value="1"/>
</dbReference>
<dbReference type="CDD" id="cd09825">
    <property type="entry name" value="thyroid_peroxidase"/>
    <property type="match status" value="1"/>
</dbReference>
<dbReference type="FunFam" id="1.10.640.10:FF:000010">
    <property type="entry name" value="Thyroid peroxidase"/>
    <property type="match status" value="1"/>
</dbReference>
<dbReference type="FunFam" id="1.10.640.10:FF:000013">
    <property type="entry name" value="Thyroid peroxidase"/>
    <property type="match status" value="1"/>
</dbReference>
<dbReference type="Gene3D" id="1.10.640.10">
    <property type="entry name" value="Haem peroxidase domain superfamily, animal type"/>
    <property type="match status" value="1"/>
</dbReference>
<dbReference type="Gene3D" id="2.10.25.10">
    <property type="entry name" value="Laminin"/>
    <property type="match status" value="1"/>
</dbReference>
<dbReference type="InterPro" id="IPR001881">
    <property type="entry name" value="EGF-like_Ca-bd_dom"/>
</dbReference>
<dbReference type="InterPro" id="IPR000742">
    <property type="entry name" value="EGF-like_dom"/>
</dbReference>
<dbReference type="InterPro" id="IPR000152">
    <property type="entry name" value="EGF-type_Asp/Asn_hydroxyl_site"/>
</dbReference>
<dbReference type="InterPro" id="IPR018097">
    <property type="entry name" value="EGF_Ca-bd_CS"/>
</dbReference>
<dbReference type="InterPro" id="IPR019791">
    <property type="entry name" value="Haem_peroxidase_animal"/>
</dbReference>
<dbReference type="InterPro" id="IPR010255">
    <property type="entry name" value="Haem_peroxidase_sf"/>
</dbReference>
<dbReference type="InterPro" id="IPR037120">
    <property type="entry name" value="Haem_peroxidase_sf_animal"/>
</dbReference>
<dbReference type="InterPro" id="IPR049883">
    <property type="entry name" value="NOTCH1_EGF-like"/>
</dbReference>
<dbReference type="InterPro" id="IPR035976">
    <property type="entry name" value="Sushi/SCR/CCP_sf"/>
</dbReference>
<dbReference type="InterPro" id="IPR000436">
    <property type="entry name" value="Sushi_SCR_CCP_dom"/>
</dbReference>
<dbReference type="InterPro" id="IPR029589">
    <property type="entry name" value="TPO"/>
</dbReference>
<dbReference type="PANTHER" id="PTHR11475">
    <property type="entry name" value="OXIDASE/PEROXIDASE"/>
    <property type="match status" value="1"/>
</dbReference>
<dbReference type="PANTHER" id="PTHR11475:SF60">
    <property type="entry name" value="THYROID PEROXIDASE"/>
    <property type="match status" value="1"/>
</dbReference>
<dbReference type="Pfam" id="PF03098">
    <property type="entry name" value="An_peroxidase"/>
    <property type="match status" value="1"/>
</dbReference>
<dbReference type="Pfam" id="PF07645">
    <property type="entry name" value="EGF_CA"/>
    <property type="match status" value="1"/>
</dbReference>
<dbReference type="PRINTS" id="PR00457">
    <property type="entry name" value="ANPEROXIDASE"/>
</dbReference>
<dbReference type="SMART" id="SM00032">
    <property type="entry name" value="CCP"/>
    <property type="match status" value="1"/>
</dbReference>
<dbReference type="SMART" id="SM00179">
    <property type="entry name" value="EGF_CA"/>
    <property type="match status" value="1"/>
</dbReference>
<dbReference type="SUPFAM" id="SSF57535">
    <property type="entry name" value="Complement control module/SCR domain"/>
    <property type="match status" value="1"/>
</dbReference>
<dbReference type="SUPFAM" id="SSF57196">
    <property type="entry name" value="EGF/Laminin"/>
    <property type="match status" value="1"/>
</dbReference>
<dbReference type="SUPFAM" id="SSF48113">
    <property type="entry name" value="Heme-dependent peroxidases"/>
    <property type="match status" value="1"/>
</dbReference>
<dbReference type="PROSITE" id="PS00010">
    <property type="entry name" value="ASX_HYDROXYL"/>
    <property type="match status" value="1"/>
</dbReference>
<dbReference type="PROSITE" id="PS50026">
    <property type="entry name" value="EGF_3"/>
    <property type="match status" value="1"/>
</dbReference>
<dbReference type="PROSITE" id="PS01187">
    <property type="entry name" value="EGF_CA"/>
    <property type="match status" value="1"/>
</dbReference>
<dbReference type="PROSITE" id="PS00435">
    <property type="entry name" value="PEROXIDASE_1"/>
    <property type="match status" value="1"/>
</dbReference>
<dbReference type="PROSITE" id="PS50292">
    <property type="entry name" value="PEROXIDASE_3"/>
    <property type="match status" value="1"/>
</dbReference>
<dbReference type="PROSITE" id="PS50923">
    <property type="entry name" value="SUSHI"/>
    <property type="match status" value="1"/>
</dbReference>
<accession>Q8HYB7</accession>
<accession>F1Q066</accession>
<feature type="signal peptide" evidence="3">
    <location>
        <begin position="1"/>
        <end position="30"/>
    </location>
</feature>
<feature type="chain" id="PRO_0000023661" description="Thyroid peroxidase">
    <location>
        <begin position="31"/>
        <end position="944"/>
    </location>
</feature>
<feature type="topological domain" description="Extracellular" evidence="3">
    <location>
        <begin position="31"/>
        <end position="858"/>
    </location>
</feature>
<feature type="transmembrane region" description="Helical" evidence="3">
    <location>
        <begin position="859"/>
        <end position="879"/>
    </location>
</feature>
<feature type="topological domain" description="Cytoplasmic" evidence="3">
    <location>
        <begin position="880"/>
        <end position="944"/>
    </location>
</feature>
<feature type="domain" description="Sushi" evidence="6">
    <location>
        <begin position="748"/>
        <end position="804"/>
    </location>
</feature>
<feature type="domain" description="EGF-like; calcium-binding" evidence="4">
    <location>
        <begin position="804"/>
        <end position="847"/>
    </location>
</feature>
<feature type="region of interest" description="Disordered" evidence="7">
    <location>
        <begin position="895"/>
        <end position="944"/>
    </location>
</feature>
<feature type="compositionally biased region" description="Polar residues" evidence="7">
    <location>
        <begin position="931"/>
        <end position="944"/>
    </location>
</feature>
<feature type="active site" description="Proton acceptor" evidence="5">
    <location>
        <position position="251"/>
    </location>
</feature>
<feature type="binding site" description="covalent" evidence="1">
    <location>
        <position position="250"/>
    </location>
    <ligand>
        <name>heme b</name>
        <dbReference type="ChEBI" id="CHEBI:60344"/>
    </ligand>
</feature>
<feature type="binding site" evidence="5">
    <location>
        <position position="252"/>
    </location>
    <ligand>
        <name>Ca(2+)</name>
        <dbReference type="ChEBI" id="CHEBI:29108"/>
    </ligand>
</feature>
<feature type="binding site" evidence="5">
    <location>
        <position position="330"/>
    </location>
    <ligand>
        <name>Ca(2+)</name>
        <dbReference type="ChEBI" id="CHEBI:29108"/>
    </ligand>
</feature>
<feature type="binding site" evidence="5">
    <location>
        <position position="332"/>
    </location>
    <ligand>
        <name>Ca(2+)</name>
        <dbReference type="ChEBI" id="CHEBI:29108"/>
    </ligand>
</feature>
<feature type="binding site" evidence="5">
    <location>
        <position position="334"/>
    </location>
    <ligand>
        <name>Ca(2+)</name>
        <dbReference type="ChEBI" id="CHEBI:29108"/>
    </ligand>
</feature>
<feature type="binding site" evidence="5">
    <location>
        <position position="336"/>
    </location>
    <ligand>
        <name>Ca(2+)</name>
        <dbReference type="ChEBI" id="CHEBI:29108"/>
    </ligand>
</feature>
<feature type="binding site" description="covalent" evidence="1">
    <location>
        <position position="408"/>
    </location>
    <ligand>
        <name>heme b</name>
        <dbReference type="ChEBI" id="CHEBI:60344"/>
    </ligand>
</feature>
<feature type="binding site" description="axial binding residue" evidence="5">
    <location>
        <position position="503"/>
    </location>
    <ligand>
        <name>heme b</name>
        <dbReference type="ChEBI" id="CHEBI:60344"/>
    </ligand>
    <ligandPart>
        <name>Fe</name>
        <dbReference type="ChEBI" id="CHEBI:18248"/>
    </ligandPart>
</feature>
<feature type="site" description="Transition state stabilizer" evidence="5">
    <location>
        <position position="405"/>
    </location>
</feature>
<feature type="glycosylation site" description="N-linked (GlcNAc...) asparagine" evidence="3">
    <location>
        <position position="141"/>
    </location>
</feature>
<feature type="glycosylation site" description="N-linked (GlcNAc...) asparagine" evidence="3">
    <location>
        <position position="316"/>
    </location>
</feature>
<feature type="glycosylation site" description="N-linked (GlcNAc...) asparagine" evidence="3">
    <location>
        <position position="351"/>
    </location>
</feature>
<feature type="glycosylation site" description="N-linked (GlcNAc...) asparagine" evidence="3">
    <location>
        <position position="623"/>
    </location>
</feature>
<feature type="disulfide bond" evidence="1">
    <location>
        <begin position="154"/>
        <end position="170"/>
    </location>
</feature>
<feature type="disulfide bond" evidence="1">
    <location>
        <begin position="271"/>
        <end position="281"/>
    </location>
</feature>
<feature type="disulfide bond" evidence="1">
    <location>
        <begin position="275"/>
        <end position="295"/>
    </location>
</feature>
<feature type="disulfide bond" evidence="1">
    <location>
        <begin position="606"/>
        <end position="663"/>
    </location>
</feature>
<feature type="disulfide bond" evidence="1">
    <location>
        <begin position="704"/>
        <end position="729"/>
    </location>
</feature>
<feature type="disulfide bond" evidence="1">
    <location>
        <begin position="750"/>
        <end position="790"/>
    </location>
</feature>
<feature type="disulfide bond" evidence="1">
    <location>
        <begin position="776"/>
        <end position="802"/>
    </location>
</feature>
<feature type="disulfide bond" evidence="1">
    <location>
        <begin position="808"/>
        <end position="822"/>
    </location>
</feature>
<feature type="disulfide bond" evidence="1">
    <location>
        <begin position="816"/>
        <end position="831"/>
    </location>
</feature>
<feature type="disulfide bond" evidence="1">
    <location>
        <begin position="833"/>
        <end position="846"/>
    </location>
</feature>
<feature type="sequence conflict" description="In Ref. 1; AAM26737." evidence="8" ref="1">
    <original>V</original>
    <variation>I</variation>
    <location>
        <position position="232"/>
    </location>
</feature>
<feature type="sequence conflict" description="In Ref. 1; AAM26737." evidence="8" ref="1">
    <original>L</original>
    <variation>F</variation>
    <location>
        <position position="501"/>
    </location>
</feature>
<feature type="sequence conflict" description="In Ref. 1; AAM26737." evidence="8" ref="1">
    <original>G</original>
    <variation>R</variation>
    <location>
        <position position="527"/>
    </location>
</feature>
<feature type="sequence conflict" description="In Ref. 1; AAM26737." evidence="8" ref="1">
    <original>F</original>
    <variation>FS</variation>
    <location>
        <position position="533"/>
    </location>
</feature>
<gene>
    <name type="primary">TPO</name>
</gene>
<keyword id="KW-0106">Calcium</keyword>
<keyword id="KW-1015">Disulfide bond</keyword>
<keyword id="KW-0245">EGF-like domain</keyword>
<keyword id="KW-0325">Glycoprotein</keyword>
<keyword id="KW-0349">Heme</keyword>
<keyword id="KW-0376">Hydrogen peroxide</keyword>
<keyword id="KW-0408">Iron</keyword>
<keyword id="KW-0472">Membrane</keyword>
<keyword id="KW-0479">Metal-binding</keyword>
<keyword id="KW-0560">Oxidoreductase</keyword>
<keyword id="KW-0575">Peroxidase</keyword>
<keyword id="KW-1185">Reference proteome</keyword>
<keyword id="KW-0732">Signal</keyword>
<keyword id="KW-0768">Sushi</keyword>
<keyword id="KW-0893">Thyroid hormones biosynthesis</keyword>
<keyword id="KW-0812">Transmembrane</keyword>
<keyword id="KW-1133">Transmembrane helix</keyword>